<name>Y4350_PSEA8</name>
<protein>
    <recommendedName>
        <fullName evidence="1">Probable transcriptional regulatory protein PLES_43501</fullName>
    </recommendedName>
</protein>
<comment type="subcellular location">
    <subcellularLocation>
        <location evidence="1">Cytoplasm</location>
    </subcellularLocation>
</comment>
<comment type="similarity">
    <text evidence="1">Belongs to the TACO1 family.</text>
</comment>
<feature type="chain" id="PRO_1000132230" description="Probable transcriptional regulatory protein PLES_43501">
    <location>
        <begin position="1"/>
        <end position="248"/>
    </location>
</feature>
<keyword id="KW-0963">Cytoplasm</keyword>
<keyword id="KW-0238">DNA-binding</keyword>
<keyword id="KW-0804">Transcription</keyword>
<keyword id="KW-0805">Transcription regulation</keyword>
<evidence type="ECO:0000255" key="1">
    <source>
        <dbReference type="HAMAP-Rule" id="MF_00693"/>
    </source>
</evidence>
<accession>B7UXW8</accession>
<proteinExistence type="inferred from homology"/>
<sequence length="248" mass="26557">MAGHSKWANIKHRKERQDAKKGKIFTKLIRELTVAARQGGGVPADNPRLRLAVDKALTANMTRDTIDRAIARGVGSNDADNMVELSYEGYAPSGVAIIVEAMTDNRNRTAAEVRHAFSKCGGNLGTDGSVAYMFERKGQISFAPGVDEEALMDAALEAGADDVVVNDDGSIDVFTTFADFISVNEALAAAGFKGDEAEVTMIPSTTATLDLETAQKVLKLIDMLEDLDDVQNVYSNADIPDDVMAQLG</sequence>
<organism>
    <name type="scientific">Pseudomonas aeruginosa (strain LESB58)</name>
    <dbReference type="NCBI Taxonomy" id="557722"/>
    <lineage>
        <taxon>Bacteria</taxon>
        <taxon>Pseudomonadati</taxon>
        <taxon>Pseudomonadota</taxon>
        <taxon>Gammaproteobacteria</taxon>
        <taxon>Pseudomonadales</taxon>
        <taxon>Pseudomonadaceae</taxon>
        <taxon>Pseudomonas</taxon>
    </lineage>
</organism>
<reference key="1">
    <citation type="journal article" date="2009" name="Genome Res.">
        <title>Newly introduced genomic prophage islands are critical determinants of in vivo competitiveness in the Liverpool epidemic strain of Pseudomonas aeruginosa.</title>
        <authorList>
            <person name="Winstanley C."/>
            <person name="Langille M.G.I."/>
            <person name="Fothergill J.L."/>
            <person name="Kukavica-Ibrulj I."/>
            <person name="Paradis-Bleau C."/>
            <person name="Sanschagrin F."/>
            <person name="Thomson N.R."/>
            <person name="Winsor G.L."/>
            <person name="Quail M.A."/>
            <person name="Lennard N."/>
            <person name="Bignell A."/>
            <person name="Clarke L."/>
            <person name="Seeger K."/>
            <person name="Saunders D."/>
            <person name="Harris D."/>
            <person name="Parkhill J."/>
            <person name="Hancock R.E.W."/>
            <person name="Brinkman F.S.L."/>
            <person name="Levesque R.C."/>
        </authorList>
    </citation>
    <scope>NUCLEOTIDE SEQUENCE [LARGE SCALE GENOMIC DNA]</scope>
    <source>
        <strain>LESB58</strain>
    </source>
</reference>
<dbReference type="EMBL" id="FM209186">
    <property type="protein sequence ID" value="CAW29105.1"/>
    <property type="molecule type" value="Genomic_DNA"/>
</dbReference>
<dbReference type="RefSeq" id="WP_003086107.1">
    <property type="nucleotide sequence ID" value="NC_011770.1"/>
</dbReference>
<dbReference type="SMR" id="B7UXW8"/>
<dbReference type="KEGG" id="pag:PLES_43501"/>
<dbReference type="HOGENOM" id="CLU_062974_2_2_6"/>
<dbReference type="GO" id="GO:0005829">
    <property type="term" value="C:cytosol"/>
    <property type="evidence" value="ECO:0007669"/>
    <property type="project" value="TreeGrafter"/>
</dbReference>
<dbReference type="GO" id="GO:0003677">
    <property type="term" value="F:DNA binding"/>
    <property type="evidence" value="ECO:0007669"/>
    <property type="project" value="UniProtKB-UniRule"/>
</dbReference>
<dbReference type="GO" id="GO:0006355">
    <property type="term" value="P:regulation of DNA-templated transcription"/>
    <property type="evidence" value="ECO:0007669"/>
    <property type="project" value="UniProtKB-UniRule"/>
</dbReference>
<dbReference type="FunFam" id="1.10.10.200:FF:000001">
    <property type="entry name" value="Probable transcriptional regulatory protein YebC"/>
    <property type="match status" value="1"/>
</dbReference>
<dbReference type="FunFam" id="3.30.70.980:FF:000002">
    <property type="entry name" value="Probable transcriptional regulatory protein YebC"/>
    <property type="match status" value="1"/>
</dbReference>
<dbReference type="Gene3D" id="1.10.10.200">
    <property type="match status" value="1"/>
</dbReference>
<dbReference type="Gene3D" id="3.30.70.980">
    <property type="match status" value="2"/>
</dbReference>
<dbReference type="HAMAP" id="MF_00693">
    <property type="entry name" value="Transcrip_reg_TACO1"/>
    <property type="match status" value="1"/>
</dbReference>
<dbReference type="InterPro" id="IPR017856">
    <property type="entry name" value="Integrase-like_N"/>
</dbReference>
<dbReference type="InterPro" id="IPR048300">
    <property type="entry name" value="TACO1_YebC-like_2nd/3rd_dom"/>
</dbReference>
<dbReference type="InterPro" id="IPR049083">
    <property type="entry name" value="TACO1_YebC_N"/>
</dbReference>
<dbReference type="InterPro" id="IPR002876">
    <property type="entry name" value="Transcrip_reg_TACO1-like"/>
</dbReference>
<dbReference type="InterPro" id="IPR026564">
    <property type="entry name" value="Transcrip_reg_TACO1-like_dom3"/>
</dbReference>
<dbReference type="InterPro" id="IPR029072">
    <property type="entry name" value="YebC-like"/>
</dbReference>
<dbReference type="NCBIfam" id="NF001030">
    <property type="entry name" value="PRK00110.1"/>
    <property type="match status" value="1"/>
</dbReference>
<dbReference type="NCBIfam" id="NF009044">
    <property type="entry name" value="PRK12378.1"/>
    <property type="match status" value="1"/>
</dbReference>
<dbReference type="NCBIfam" id="TIGR01033">
    <property type="entry name" value="YebC/PmpR family DNA-binding transcriptional regulator"/>
    <property type="match status" value="1"/>
</dbReference>
<dbReference type="PANTHER" id="PTHR12532:SF6">
    <property type="entry name" value="TRANSCRIPTIONAL REGULATORY PROTEIN YEBC-RELATED"/>
    <property type="match status" value="1"/>
</dbReference>
<dbReference type="PANTHER" id="PTHR12532">
    <property type="entry name" value="TRANSLATIONAL ACTIVATOR OF CYTOCHROME C OXIDASE 1"/>
    <property type="match status" value="1"/>
</dbReference>
<dbReference type="Pfam" id="PF20772">
    <property type="entry name" value="TACO1_YebC_N"/>
    <property type="match status" value="1"/>
</dbReference>
<dbReference type="Pfam" id="PF01709">
    <property type="entry name" value="Transcrip_reg"/>
    <property type="match status" value="1"/>
</dbReference>
<dbReference type="SUPFAM" id="SSF75625">
    <property type="entry name" value="YebC-like"/>
    <property type="match status" value="1"/>
</dbReference>
<gene>
    <name type="ordered locus">PLES_43501</name>
</gene>